<organism>
    <name type="scientific">Methanosphaerula palustris (strain ATCC BAA-1556 / DSM 19958 / E1-9c)</name>
    <dbReference type="NCBI Taxonomy" id="521011"/>
    <lineage>
        <taxon>Archaea</taxon>
        <taxon>Methanobacteriati</taxon>
        <taxon>Methanobacteriota</taxon>
        <taxon>Stenosarchaea group</taxon>
        <taxon>Methanomicrobia</taxon>
        <taxon>Methanomicrobiales</taxon>
        <taxon>Methanoregulaceae</taxon>
        <taxon>Methanosphaerula</taxon>
    </lineage>
</organism>
<feature type="chain" id="PRO_1000148368" description="Ribonuclease P protein component 2">
    <location>
        <begin position="1"/>
        <end position="160"/>
    </location>
</feature>
<keyword id="KW-0963">Cytoplasm</keyword>
<keyword id="KW-0255">Endonuclease</keyword>
<keyword id="KW-0378">Hydrolase</keyword>
<keyword id="KW-0540">Nuclease</keyword>
<keyword id="KW-1185">Reference proteome</keyword>
<keyword id="KW-0819">tRNA processing</keyword>
<protein>
    <recommendedName>
        <fullName evidence="1">Ribonuclease P protein component 2</fullName>
        <shortName evidence="1">RNase P component 2</shortName>
        <ecNumber evidence="1">3.1.26.5</ecNumber>
    </recommendedName>
    <alternativeName>
        <fullName evidence="1">Pop5</fullName>
    </alternativeName>
</protein>
<sequence length="160" mass="17804">MKPRPPTMRIKKRYVLAAIVPNYPSIDSKVLYVAIAEAITGLYGDGAGAALHHAVVFAGDGYLIARCSRGSEQFLATALAVVTEVDGQRVAFRTLATSGTIHALRRRMRQPVERPEREDLEVDGVIYEVHVRESQKVDLIEKGCNSQKLLFLVEQDLQER</sequence>
<name>RNP2_METPE</name>
<evidence type="ECO:0000255" key="1">
    <source>
        <dbReference type="HAMAP-Rule" id="MF_00755"/>
    </source>
</evidence>
<dbReference type="EC" id="3.1.26.5" evidence="1"/>
<dbReference type="EMBL" id="CP001338">
    <property type="protein sequence ID" value="ACL17800.1"/>
    <property type="molecule type" value="Genomic_DNA"/>
</dbReference>
<dbReference type="RefSeq" id="WP_012619119.1">
    <property type="nucleotide sequence ID" value="NC_011832.1"/>
</dbReference>
<dbReference type="SMR" id="B8GEZ4"/>
<dbReference type="STRING" id="521011.Mpal_2527"/>
<dbReference type="GeneID" id="7271696"/>
<dbReference type="KEGG" id="mpl:Mpal_2527"/>
<dbReference type="eggNOG" id="arCOG01365">
    <property type="taxonomic scope" value="Archaea"/>
</dbReference>
<dbReference type="HOGENOM" id="CLU_137733_1_0_2"/>
<dbReference type="OrthoDB" id="19261at2157"/>
<dbReference type="Proteomes" id="UP000002457">
    <property type="component" value="Chromosome"/>
</dbReference>
<dbReference type="GO" id="GO:0005737">
    <property type="term" value="C:cytoplasm"/>
    <property type="evidence" value="ECO:0007669"/>
    <property type="project" value="UniProtKB-SubCell"/>
</dbReference>
<dbReference type="GO" id="GO:0030677">
    <property type="term" value="C:ribonuclease P complex"/>
    <property type="evidence" value="ECO:0007669"/>
    <property type="project" value="UniProtKB-UniRule"/>
</dbReference>
<dbReference type="GO" id="GO:0004526">
    <property type="term" value="F:ribonuclease P activity"/>
    <property type="evidence" value="ECO:0007669"/>
    <property type="project" value="UniProtKB-UniRule"/>
</dbReference>
<dbReference type="GO" id="GO:0001682">
    <property type="term" value="P:tRNA 5'-leader removal"/>
    <property type="evidence" value="ECO:0007669"/>
    <property type="project" value="UniProtKB-UniRule"/>
</dbReference>
<dbReference type="Gene3D" id="3.30.70.3250">
    <property type="entry name" value="Ribonuclease P, Pop5 subunit"/>
    <property type="match status" value="1"/>
</dbReference>
<dbReference type="HAMAP" id="MF_00755">
    <property type="entry name" value="RNase_P_2"/>
    <property type="match status" value="1"/>
</dbReference>
<dbReference type="InterPro" id="IPR002759">
    <property type="entry name" value="Pop5/Rpp14/Rnp2-like"/>
</dbReference>
<dbReference type="InterPro" id="IPR038085">
    <property type="entry name" value="Rnp2-like_sf"/>
</dbReference>
<dbReference type="PANTHER" id="PTHR48414">
    <property type="entry name" value="POP5 HOMOLOG, RIBONUCLEASE P_MRP SUBUNIT"/>
    <property type="match status" value="1"/>
</dbReference>
<dbReference type="PANTHER" id="PTHR48414:SF1">
    <property type="entry name" value="POP5 HOMOLOG, RIBONUCLEASE P_MRP SUBUNIT"/>
    <property type="match status" value="1"/>
</dbReference>
<dbReference type="Pfam" id="PF01900">
    <property type="entry name" value="RNase_P_Rpp14"/>
    <property type="match status" value="1"/>
</dbReference>
<dbReference type="SUPFAM" id="SSF160350">
    <property type="entry name" value="Rnp2-like"/>
    <property type="match status" value="1"/>
</dbReference>
<comment type="function">
    <text evidence="1">Part of ribonuclease P, a protein complex that generates mature tRNA molecules by cleaving their 5'-ends.</text>
</comment>
<comment type="catalytic activity">
    <reaction evidence="1">
        <text>Endonucleolytic cleavage of RNA, removing 5'-extranucleotides from tRNA precursor.</text>
        <dbReference type="EC" id="3.1.26.5"/>
    </reaction>
</comment>
<comment type="subunit">
    <text evidence="1">Consists of a catalytic RNA component and at least 4-5 protein subunits.</text>
</comment>
<comment type="subcellular location">
    <subcellularLocation>
        <location evidence="1">Cytoplasm</location>
    </subcellularLocation>
</comment>
<comment type="similarity">
    <text evidence="1">Belongs to the eukaryotic/archaeal RNase P protein component 2 family.</text>
</comment>
<gene>
    <name evidence="1" type="primary">rnp2</name>
    <name type="ordered locus">Mpal_2527</name>
</gene>
<reference key="1">
    <citation type="journal article" date="2015" name="Genome Announc.">
        <title>Complete Genome Sequence of Methanosphaerula palustris E1-9CT, a Hydrogenotrophic Methanogen Isolated from a Minerotrophic Fen Peatland.</title>
        <authorList>
            <person name="Cadillo-Quiroz H."/>
            <person name="Browne P."/>
            <person name="Kyrpides N."/>
            <person name="Woyke T."/>
            <person name="Goodwin L."/>
            <person name="Detter C."/>
            <person name="Yavitt J.B."/>
            <person name="Zinder S.H."/>
        </authorList>
    </citation>
    <scope>NUCLEOTIDE SEQUENCE [LARGE SCALE GENOMIC DNA]</scope>
    <source>
        <strain>ATCC BAA-1556 / DSM 19958 / E1-9c</strain>
    </source>
</reference>
<proteinExistence type="inferred from homology"/>
<accession>B8GEZ4</accession>